<reference key="1">
    <citation type="journal article" date="2009" name="PLoS Genet.">
        <title>Organised genome dynamics in the Escherichia coli species results in highly diverse adaptive paths.</title>
        <authorList>
            <person name="Touchon M."/>
            <person name="Hoede C."/>
            <person name="Tenaillon O."/>
            <person name="Barbe V."/>
            <person name="Baeriswyl S."/>
            <person name="Bidet P."/>
            <person name="Bingen E."/>
            <person name="Bonacorsi S."/>
            <person name="Bouchier C."/>
            <person name="Bouvet O."/>
            <person name="Calteau A."/>
            <person name="Chiapello H."/>
            <person name="Clermont O."/>
            <person name="Cruveiller S."/>
            <person name="Danchin A."/>
            <person name="Diard M."/>
            <person name="Dossat C."/>
            <person name="Karoui M.E."/>
            <person name="Frapy E."/>
            <person name="Garry L."/>
            <person name="Ghigo J.M."/>
            <person name="Gilles A.M."/>
            <person name="Johnson J."/>
            <person name="Le Bouguenec C."/>
            <person name="Lescat M."/>
            <person name="Mangenot S."/>
            <person name="Martinez-Jehanne V."/>
            <person name="Matic I."/>
            <person name="Nassif X."/>
            <person name="Oztas S."/>
            <person name="Petit M.A."/>
            <person name="Pichon C."/>
            <person name="Rouy Z."/>
            <person name="Ruf C.S."/>
            <person name="Schneider D."/>
            <person name="Tourret J."/>
            <person name="Vacherie B."/>
            <person name="Vallenet D."/>
            <person name="Medigue C."/>
            <person name="Rocha E.P.C."/>
            <person name="Denamur E."/>
        </authorList>
    </citation>
    <scope>NUCLEOTIDE SEQUENCE [LARGE SCALE GENOMIC DNA]</scope>
    <source>
        <strain>IAI1</strain>
    </source>
</reference>
<dbReference type="EMBL" id="CU928160">
    <property type="protein sequence ID" value="CAQ98996.1"/>
    <property type="molecule type" value="Genomic_DNA"/>
</dbReference>
<dbReference type="RefSeq" id="WP_000678962.1">
    <property type="nucleotide sequence ID" value="NC_011741.1"/>
</dbReference>
<dbReference type="SMR" id="B7M457"/>
<dbReference type="KEGG" id="ecr:ECIAI1_2150"/>
<dbReference type="HOGENOM" id="CLU_018816_2_0_6"/>
<dbReference type="GO" id="GO:1990281">
    <property type="term" value="C:efflux pump complex"/>
    <property type="evidence" value="ECO:0007669"/>
    <property type="project" value="TreeGrafter"/>
</dbReference>
<dbReference type="GO" id="GO:0005886">
    <property type="term" value="C:plasma membrane"/>
    <property type="evidence" value="ECO:0007669"/>
    <property type="project" value="UniProtKB-SubCell"/>
</dbReference>
<dbReference type="GO" id="GO:0015562">
    <property type="term" value="F:efflux transmembrane transporter activity"/>
    <property type="evidence" value="ECO:0007669"/>
    <property type="project" value="TreeGrafter"/>
</dbReference>
<dbReference type="FunFam" id="2.40.420.20:FF:000001">
    <property type="entry name" value="Efflux RND transporter periplasmic adaptor subunit"/>
    <property type="match status" value="1"/>
</dbReference>
<dbReference type="FunFam" id="1.10.287.470:FF:000005">
    <property type="entry name" value="Multidrug resistance protein MdtA"/>
    <property type="match status" value="1"/>
</dbReference>
<dbReference type="FunFam" id="2.40.30.170:FF:000006">
    <property type="entry name" value="Multidrug resistance protein MdtA"/>
    <property type="match status" value="1"/>
</dbReference>
<dbReference type="Gene3D" id="2.40.30.170">
    <property type="match status" value="1"/>
</dbReference>
<dbReference type="Gene3D" id="2.40.420.20">
    <property type="match status" value="1"/>
</dbReference>
<dbReference type="Gene3D" id="2.40.50.100">
    <property type="match status" value="1"/>
</dbReference>
<dbReference type="Gene3D" id="1.10.287.470">
    <property type="entry name" value="Helix hairpin bin"/>
    <property type="match status" value="1"/>
</dbReference>
<dbReference type="HAMAP" id="MF_01422">
    <property type="entry name" value="MdtA"/>
    <property type="match status" value="1"/>
</dbReference>
<dbReference type="InterPro" id="IPR032317">
    <property type="entry name" value="CusB_D23"/>
</dbReference>
<dbReference type="InterPro" id="IPR022824">
    <property type="entry name" value="Multidrug-R_MdtA"/>
</dbReference>
<dbReference type="InterPro" id="IPR006143">
    <property type="entry name" value="RND_pump_MFP"/>
</dbReference>
<dbReference type="NCBIfam" id="NF008589">
    <property type="entry name" value="PRK11556.1"/>
    <property type="match status" value="1"/>
</dbReference>
<dbReference type="NCBIfam" id="TIGR01730">
    <property type="entry name" value="RND_mfp"/>
    <property type="match status" value="1"/>
</dbReference>
<dbReference type="PANTHER" id="PTHR30469">
    <property type="entry name" value="MULTIDRUG RESISTANCE PROTEIN MDTA"/>
    <property type="match status" value="1"/>
</dbReference>
<dbReference type="PANTHER" id="PTHR30469:SF12">
    <property type="entry name" value="MULTIDRUG RESISTANCE PROTEIN MDTA"/>
    <property type="match status" value="1"/>
</dbReference>
<dbReference type="Pfam" id="PF16576">
    <property type="entry name" value="HlyD_D23"/>
    <property type="match status" value="1"/>
</dbReference>
<dbReference type="SUPFAM" id="SSF111369">
    <property type="entry name" value="HlyD-like secretion proteins"/>
    <property type="match status" value="1"/>
</dbReference>
<feature type="signal peptide" evidence="1">
    <location>
        <begin position="1"/>
        <end position="21"/>
    </location>
</feature>
<feature type="chain" id="PRO_1000145637" description="Multidrug resistance protein MdtA">
    <location>
        <begin position="22"/>
        <end position="415"/>
    </location>
</feature>
<feature type="region of interest" description="Disordered" evidence="2">
    <location>
        <begin position="31"/>
        <end position="60"/>
    </location>
</feature>
<feature type="region of interest" description="Disordered" evidence="2">
    <location>
        <begin position="392"/>
        <end position="415"/>
    </location>
</feature>
<feature type="compositionally biased region" description="Polar residues" evidence="2">
    <location>
        <begin position="31"/>
        <end position="47"/>
    </location>
</feature>
<feature type="compositionally biased region" description="Basic and acidic residues" evidence="2">
    <location>
        <begin position="399"/>
        <end position="415"/>
    </location>
</feature>
<evidence type="ECO:0000255" key="1">
    <source>
        <dbReference type="HAMAP-Rule" id="MF_01422"/>
    </source>
</evidence>
<evidence type="ECO:0000256" key="2">
    <source>
        <dbReference type="SAM" id="MobiDB-lite"/>
    </source>
</evidence>
<keyword id="KW-0997">Cell inner membrane</keyword>
<keyword id="KW-1003">Cell membrane</keyword>
<keyword id="KW-0472">Membrane</keyword>
<keyword id="KW-0732">Signal</keyword>
<keyword id="KW-0813">Transport</keyword>
<organism>
    <name type="scientific">Escherichia coli O8 (strain IAI1)</name>
    <dbReference type="NCBI Taxonomy" id="585034"/>
    <lineage>
        <taxon>Bacteria</taxon>
        <taxon>Pseudomonadati</taxon>
        <taxon>Pseudomonadota</taxon>
        <taxon>Gammaproteobacteria</taxon>
        <taxon>Enterobacterales</taxon>
        <taxon>Enterobacteriaceae</taxon>
        <taxon>Escherichia</taxon>
    </lineage>
</organism>
<comment type="function">
    <text evidence="1">The MdtABC tripartite complex confers resistance against novobiocin and deoxycholate.</text>
</comment>
<comment type="subunit">
    <text evidence="1">Part of a tripartite efflux system composed of MdtA, MdtB and MdtC.</text>
</comment>
<comment type="subcellular location">
    <subcellularLocation>
        <location evidence="1">Cell inner membrane</location>
        <topology evidence="1">Peripheral membrane protein</topology>
    </subcellularLocation>
</comment>
<comment type="induction">
    <text evidence="1">The mdtABC operon is transcriptionally activated by BaeR.</text>
</comment>
<comment type="similarity">
    <text evidence="1">Belongs to the membrane fusion protein (MFP) (TC 8.A.1) family.</text>
</comment>
<protein>
    <recommendedName>
        <fullName evidence="1">Multidrug resistance protein MdtA</fullName>
    </recommendedName>
    <alternativeName>
        <fullName evidence="1">Multidrug transporter MdtA</fullName>
    </alternativeName>
</protein>
<proteinExistence type="inferred from homology"/>
<gene>
    <name evidence="1" type="primary">mdtA</name>
    <name type="ordered locus">ECIAI1_2150</name>
</gene>
<sequence>MKGSYKSRWVIVIVVVIAAIAAFWFWQGRNDSQSAAPGATKQAQQSPAGGRRGMRSGPLAPVQAATAVEQAVPRYLTGLGTITAANTVTVRSRVDGQLMALHFQEGQQVKAGDLLAEIDPSQFKVALAQAQGQLAKDKATLANARRDLARYQQLAKTNLVSRQELDAQQALVSETEGTIKADEASVASAQLQLDWSRITAPVDGRVGLKQVDVGNQISSGDTTGIVVITQTHPIDLVFTLPESDIATVVQAQKAGKPLVVEAWDRTNSKKLSEGTLLSLDNQIDATTGTIKVKARFNNQDDALFPNQFVNARMLVDTEQNAVVIPTAALQMGNEGHFVWVLNSENKVSKHLVTPGIQDSQKVVIRAGISAGDRVVTDGIDRLTEGAKVEVVEAQSATTPEEKATSREYAKKGARS</sequence>
<name>MDTA_ECO8A</name>
<accession>B7M457</accession>